<name>HYDN_ECO57</name>
<proteinExistence type="inferred from homology"/>
<protein>
    <recommendedName>
        <fullName>Electron transport protein HydN</fullName>
    </recommendedName>
</protein>
<comment type="function">
    <text evidence="1">Electron transport from formate to hydrogen.</text>
</comment>
<comment type="cofactor">
    <cofactor evidence="1">
        <name>[4Fe-4S] cluster</name>
        <dbReference type="ChEBI" id="CHEBI:49883"/>
    </cofactor>
    <text evidence="1">Binds 4 [4Fe-4S] clusters.</text>
</comment>
<accession>P0AAK6</accession>
<accession>P30132</accession>
<dbReference type="EMBL" id="AE005174">
    <property type="protein sequence ID" value="AAG57820.1"/>
    <property type="molecule type" value="Genomic_DNA"/>
</dbReference>
<dbReference type="EMBL" id="BA000007">
    <property type="protein sequence ID" value="BAB36992.1"/>
    <property type="molecule type" value="Genomic_DNA"/>
</dbReference>
<dbReference type="PIR" id="A91075">
    <property type="entry name" value="A91075"/>
</dbReference>
<dbReference type="RefSeq" id="NP_311596.1">
    <property type="nucleotide sequence ID" value="NC_002695.1"/>
</dbReference>
<dbReference type="RefSeq" id="WP_001078777.1">
    <property type="nucleotide sequence ID" value="NZ_VOAI01000003.1"/>
</dbReference>
<dbReference type="SMR" id="P0AAK6"/>
<dbReference type="STRING" id="155864.Z4021"/>
<dbReference type="GeneID" id="914709"/>
<dbReference type="GeneID" id="93779298"/>
<dbReference type="KEGG" id="ece:Z4021"/>
<dbReference type="KEGG" id="ecs:ECs_3569"/>
<dbReference type="PATRIC" id="fig|386585.9.peg.3729"/>
<dbReference type="eggNOG" id="COG1142">
    <property type="taxonomic scope" value="Bacteria"/>
</dbReference>
<dbReference type="HOGENOM" id="CLU_043374_3_0_6"/>
<dbReference type="OMA" id="DNCGDCV"/>
<dbReference type="Proteomes" id="UP000000558">
    <property type="component" value="Chromosome"/>
</dbReference>
<dbReference type="Proteomes" id="UP000002519">
    <property type="component" value="Chromosome"/>
</dbReference>
<dbReference type="GO" id="GO:0051539">
    <property type="term" value="F:4 iron, 4 sulfur cluster binding"/>
    <property type="evidence" value="ECO:0007669"/>
    <property type="project" value="UniProtKB-KW"/>
</dbReference>
<dbReference type="GO" id="GO:0046872">
    <property type="term" value="F:metal ion binding"/>
    <property type="evidence" value="ECO:0007669"/>
    <property type="project" value="UniProtKB-KW"/>
</dbReference>
<dbReference type="CDD" id="cd10554">
    <property type="entry name" value="HycB_like"/>
    <property type="match status" value="1"/>
</dbReference>
<dbReference type="FunFam" id="3.30.70.20:FF:000027">
    <property type="entry name" value="Electron transport protein hydN"/>
    <property type="match status" value="1"/>
</dbReference>
<dbReference type="Gene3D" id="3.30.70.20">
    <property type="match status" value="2"/>
</dbReference>
<dbReference type="InterPro" id="IPR017896">
    <property type="entry name" value="4Fe4S_Fe-S-bd"/>
</dbReference>
<dbReference type="InterPro" id="IPR017900">
    <property type="entry name" value="4Fe4S_Fe_S_CS"/>
</dbReference>
<dbReference type="InterPro" id="IPR050294">
    <property type="entry name" value="RnfB_subfamily"/>
</dbReference>
<dbReference type="NCBIfam" id="NF007658">
    <property type="entry name" value="PRK10330.1"/>
    <property type="match status" value="1"/>
</dbReference>
<dbReference type="PANTHER" id="PTHR42859:SF17">
    <property type="entry name" value="ELECTRON TRANSPORT PROTEIN HYDN-RELATED"/>
    <property type="match status" value="1"/>
</dbReference>
<dbReference type="PANTHER" id="PTHR42859">
    <property type="entry name" value="OXIDOREDUCTASE"/>
    <property type="match status" value="1"/>
</dbReference>
<dbReference type="Pfam" id="PF13247">
    <property type="entry name" value="Fer4_11"/>
    <property type="match status" value="1"/>
</dbReference>
<dbReference type="Pfam" id="PF12800">
    <property type="entry name" value="Fer4_4"/>
    <property type="match status" value="1"/>
</dbReference>
<dbReference type="SUPFAM" id="SSF54862">
    <property type="entry name" value="4Fe-4S ferredoxins"/>
    <property type="match status" value="1"/>
</dbReference>
<dbReference type="PROSITE" id="PS00198">
    <property type="entry name" value="4FE4S_FER_1"/>
    <property type="match status" value="1"/>
</dbReference>
<dbReference type="PROSITE" id="PS51379">
    <property type="entry name" value="4FE4S_FER_2"/>
    <property type="match status" value="4"/>
</dbReference>
<gene>
    <name type="primary">hydN</name>
    <name type="ordered locus">Z4021</name>
    <name type="ordered locus">ECs3569</name>
</gene>
<sequence length="175" mass="19026">MNRFIIADASKCIGCRTCEVACVVSHQENQDCASLTPETFLPRIHVIKGVNISTATVCRQCEDAPCANVCPNGAISRDKGFVHVMQERCIGCKTCVVACPYGAMEVVVRPVIRNSGAGLNVRADKAEANKCDLCNHREDGPACMAACPTHALICVDRNKLEQLSAEKRRRTALMF</sequence>
<feature type="chain" id="PRO_0000159270" description="Electron transport protein HydN">
    <location>
        <begin position="1"/>
        <end position="175"/>
    </location>
</feature>
<feature type="domain" description="4Fe-4S ferredoxin-type 1" evidence="2">
    <location>
        <begin position="2"/>
        <end position="32"/>
    </location>
</feature>
<feature type="domain" description="4Fe-4S ferredoxin-type 2" evidence="2">
    <location>
        <begin position="48"/>
        <end position="79"/>
    </location>
</feature>
<feature type="domain" description="4Fe-4S ferredoxin-type 3" evidence="2">
    <location>
        <begin position="80"/>
        <end position="109"/>
    </location>
</feature>
<feature type="domain" description="4Fe-4S ferredoxin-type 4" evidence="2">
    <location>
        <begin position="124"/>
        <end position="157"/>
    </location>
</feature>
<feature type="binding site" evidence="1">
    <location>
        <position position="12"/>
    </location>
    <ligand>
        <name>[4Fe-4S] cluster</name>
        <dbReference type="ChEBI" id="CHEBI:49883"/>
        <label>1</label>
    </ligand>
</feature>
<feature type="binding site" evidence="1">
    <location>
        <position position="15"/>
    </location>
    <ligand>
        <name>[4Fe-4S] cluster</name>
        <dbReference type="ChEBI" id="CHEBI:49883"/>
        <label>1</label>
    </ligand>
</feature>
<feature type="binding site" evidence="1">
    <location>
        <position position="18"/>
    </location>
    <ligand>
        <name>[4Fe-4S] cluster</name>
        <dbReference type="ChEBI" id="CHEBI:49883"/>
        <label>1</label>
    </ligand>
</feature>
<feature type="binding site" evidence="1">
    <location>
        <position position="22"/>
    </location>
    <ligand>
        <name>[4Fe-4S] cluster</name>
        <dbReference type="ChEBI" id="CHEBI:49883"/>
        <label>2</label>
    </ligand>
</feature>
<feature type="binding site" evidence="1">
    <location>
        <position position="58"/>
    </location>
    <ligand>
        <name>[4Fe-4S] cluster</name>
        <dbReference type="ChEBI" id="CHEBI:49883"/>
        <label>3</label>
    </ligand>
</feature>
<feature type="binding site" evidence="1">
    <location>
        <position position="61"/>
    </location>
    <ligand>
        <name>[4Fe-4S] cluster</name>
        <dbReference type="ChEBI" id="CHEBI:49883"/>
        <label>3</label>
    </ligand>
</feature>
<feature type="binding site" evidence="1">
    <location>
        <position position="66"/>
    </location>
    <ligand>
        <name>[4Fe-4S] cluster</name>
        <dbReference type="ChEBI" id="CHEBI:49883"/>
        <label>3</label>
    </ligand>
</feature>
<feature type="binding site" evidence="1">
    <location>
        <position position="70"/>
    </location>
    <ligand>
        <name>[4Fe-4S] cluster</name>
        <dbReference type="ChEBI" id="CHEBI:49883"/>
        <label>4</label>
    </ligand>
</feature>
<feature type="binding site" evidence="1">
    <location>
        <position position="89"/>
    </location>
    <ligand>
        <name>[4Fe-4S] cluster</name>
        <dbReference type="ChEBI" id="CHEBI:49883"/>
        <label>4</label>
    </ligand>
</feature>
<feature type="binding site" evidence="1">
    <location>
        <position position="92"/>
    </location>
    <ligand>
        <name>[4Fe-4S] cluster</name>
        <dbReference type="ChEBI" id="CHEBI:49883"/>
        <label>4</label>
    </ligand>
</feature>
<feature type="binding site" evidence="1">
    <location>
        <position position="95"/>
    </location>
    <ligand>
        <name>[4Fe-4S] cluster</name>
        <dbReference type="ChEBI" id="CHEBI:49883"/>
        <label>4</label>
    </ligand>
</feature>
<feature type="binding site" evidence="1">
    <location>
        <position position="99"/>
    </location>
    <ligand>
        <name>[4Fe-4S] cluster</name>
        <dbReference type="ChEBI" id="CHEBI:49883"/>
        <label>3</label>
    </ligand>
</feature>
<feature type="binding site" evidence="1">
    <location>
        <position position="131"/>
    </location>
    <ligand>
        <name>[4Fe-4S] cluster</name>
        <dbReference type="ChEBI" id="CHEBI:49883"/>
        <label>2</label>
    </ligand>
</feature>
<feature type="binding site" evidence="1">
    <location>
        <position position="134"/>
    </location>
    <ligand>
        <name>[4Fe-4S] cluster</name>
        <dbReference type="ChEBI" id="CHEBI:49883"/>
        <label>2</label>
    </ligand>
</feature>
<feature type="binding site" evidence="1">
    <location>
        <position position="143"/>
    </location>
    <ligand>
        <name>[4Fe-4S] cluster</name>
        <dbReference type="ChEBI" id="CHEBI:49883"/>
        <label>2</label>
    </ligand>
</feature>
<feature type="binding site" evidence="1">
    <location>
        <position position="147"/>
    </location>
    <ligand>
        <name>[4Fe-4S] cluster</name>
        <dbReference type="ChEBI" id="CHEBI:49883"/>
        <label>1</label>
    </ligand>
</feature>
<reference key="1">
    <citation type="journal article" date="2001" name="Nature">
        <title>Genome sequence of enterohaemorrhagic Escherichia coli O157:H7.</title>
        <authorList>
            <person name="Perna N.T."/>
            <person name="Plunkett G. III"/>
            <person name="Burland V."/>
            <person name="Mau B."/>
            <person name="Glasner J.D."/>
            <person name="Rose D.J."/>
            <person name="Mayhew G.F."/>
            <person name="Evans P.S."/>
            <person name="Gregor J."/>
            <person name="Kirkpatrick H.A."/>
            <person name="Posfai G."/>
            <person name="Hackett J."/>
            <person name="Klink S."/>
            <person name="Boutin A."/>
            <person name="Shao Y."/>
            <person name="Miller L."/>
            <person name="Grotbeck E.J."/>
            <person name="Davis N.W."/>
            <person name="Lim A."/>
            <person name="Dimalanta E.T."/>
            <person name="Potamousis K."/>
            <person name="Apodaca J."/>
            <person name="Anantharaman T.S."/>
            <person name="Lin J."/>
            <person name="Yen G."/>
            <person name="Schwartz D.C."/>
            <person name="Welch R.A."/>
            <person name="Blattner F.R."/>
        </authorList>
    </citation>
    <scope>NUCLEOTIDE SEQUENCE [LARGE SCALE GENOMIC DNA]</scope>
    <source>
        <strain>O157:H7 / EDL933 / ATCC 700927 / EHEC</strain>
    </source>
</reference>
<reference key="2">
    <citation type="journal article" date="2001" name="DNA Res.">
        <title>Complete genome sequence of enterohemorrhagic Escherichia coli O157:H7 and genomic comparison with a laboratory strain K-12.</title>
        <authorList>
            <person name="Hayashi T."/>
            <person name="Makino K."/>
            <person name="Ohnishi M."/>
            <person name="Kurokawa K."/>
            <person name="Ishii K."/>
            <person name="Yokoyama K."/>
            <person name="Han C.-G."/>
            <person name="Ohtsubo E."/>
            <person name="Nakayama K."/>
            <person name="Murata T."/>
            <person name="Tanaka M."/>
            <person name="Tobe T."/>
            <person name="Iida T."/>
            <person name="Takami H."/>
            <person name="Honda T."/>
            <person name="Sasakawa C."/>
            <person name="Ogasawara N."/>
            <person name="Yasunaga T."/>
            <person name="Kuhara S."/>
            <person name="Shiba T."/>
            <person name="Hattori M."/>
            <person name="Shinagawa H."/>
        </authorList>
    </citation>
    <scope>NUCLEOTIDE SEQUENCE [LARGE SCALE GENOMIC DNA]</scope>
    <source>
        <strain>O157:H7 / Sakai / RIMD 0509952 / EHEC</strain>
    </source>
</reference>
<keyword id="KW-0004">4Fe-4S</keyword>
<keyword id="KW-0249">Electron transport</keyword>
<keyword id="KW-0408">Iron</keyword>
<keyword id="KW-0411">Iron-sulfur</keyword>
<keyword id="KW-0479">Metal-binding</keyword>
<keyword id="KW-1185">Reference proteome</keyword>
<keyword id="KW-0677">Repeat</keyword>
<keyword id="KW-0813">Transport</keyword>
<organism>
    <name type="scientific">Escherichia coli O157:H7</name>
    <dbReference type="NCBI Taxonomy" id="83334"/>
    <lineage>
        <taxon>Bacteria</taxon>
        <taxon>Pseudomonadati</taxon>
        <taxon>Pseudomonadota</taxon>
        <taxon>Gammaproteobacteria</taxon>
        <taxon>Enterobacterales</taxon>
        <taxon>Enterobacteriaceae</taxon>
        <taxon>Escherichia</taxon>
    </lineage>
</organism>
<evidence type="ECO:0000250" key="1"/>
<evidence type="ECO:0000255" key="2">
    <source>
        <dbReference type="PROSITE-ProRule" id="PRU00711"/>
    </source>
</evidence>